<organism>
    <name type="scientific">Drosophila yakuba</name>
    <name type="common">Fruit fly</name>
    <dbReference type="NCBI Taxonomy" id="7245"/>
    <lineage>
        <taxon>Eukaryota</taxon>
        <taxon>Metazoa</taxon>
        <taxon>Ecdysozoa</taxon>
        <taxon>Arthropoda</taxon>
        <taxon>Hexapoda</taxon>
        <taxon>Insecta</taxon>
        <taxon>Pterygota</taxon>
        <taxon>Neoptera</taxon>
        <taxon>Endopterygota</taxon>
        <taxon>Diptera</taxon>
        <taxon>Brachycera</taxon>
        <taxon>Muscomorpha</taxon>
        <taxon>Ephydroidea</taxon>
        <taxon>Drosophilidae</taxon>
        <taxon>Drosophila</taxon>
        <taxon>Sophophora</taxon>
    </lineage>
</organism>
<name>CTU2_DROYA</name>
<accession>B4PAZ6</accession>
<dbReference type="EMBL" id="CM000158">
    <property type="protein sequence ID" value="EDW90425.1"/>
    <property type="molecule type" value="Genomic_DNA"/>
</dbReference>
<dbReference type="SMR" id="B4PAZ6"/>
<dbReference type="EnsemblMetazoa" id="FBtr0259165">
    <property type="protein sequence ID" value="FBpp0257657"/>
    <property type="gene ID" value="FBgn0230375"/>
</dbReference>
<dbReference type="EnsemblMetazoa" id="XM_002090677.4">
    <property type="protein sequence ID" value="XP_002090713.1"/>
    <property type="gene ID" value="LOC6529720"/>
</dbReference>
<dbReference type="GeneID" id="6529720"/>
<dbReference type="KEGG" id="dya:Dyak_GE12647"/>
<dbReference type="CTD" id="348180"/>
<dbReference type="eggNOG" id="KOG2594">
    <property type="taxonomic scope" value="Eukaryota"/>
</dbReference>
<dbReference type="HOGENOM" id="CLU_024534_2_1_1"/>
<dbReference type="OMA" id="CHACRNI"/>
<dbReference type="OrthoDB" id="25129at2759"/>
<dbReference type="PhylomeDB" id="B4PAZ6"/>
<dbReference type="UniPathway" id="UPA00988"/>
<dbReference type="Proteomes" id="UP000002282">
    <property type="component" value="Chromosome 2R"/>
</dbReference>
<dbReference type="GO" id="GO:0005829">
    <property type="term" value="C:cytosol"/>
    <property type="evidence" value="ECO:0000250"/>
    <property type="project" value="UniProtKB"/>
</dbReference>
<dbReference type="GO" id="GO:0016779">
    <property type="term" value="F:nucleotidyltransferase activity"/>
    <property type="evidence" value="ECO:0007669"/>
    <property type="project" value="UniProtKB-UniRule"/>
</dbReference>
<dbReference type="GO" id="GO:0016783">
    <property type="term" value="F:sulfurtransferase activity"/>
    <property type="evidence" value="ECO:0007669"/>
    <property type="project" value="TreeGrafter"/>
</dbReference>
<dbReference type="GO" id="GO:0000049">
    <property type="term" value="F:tRNA binding"/>
    <property type="evidence" value="ECO:0007669"/>
    <property type="project" value="InterPro"/>
</dbReference>
<dbReference type="GO" id="GO:0032447">
    <property type="term" value="P:protein urmylation"/>
    <property type="evidence" value="ECO:0007669"/>
    <property type="project" value="UniProtKB-UniRule"/>
</dbReference>
<dbReference type="GO" id="GO:0034227">
    <property type="term" value="P:tRNA thio-modification"/>
    <property type="evidence" value="ECO:0000250"/>
    <property type="project" value="UniProtKB"/>
</dbReference>
<dbReference type="GO" id="GO:0002143">
    <property type="term" value="P:tRNA wobble position uridine thiolation"/>
    <property type="evidence" value="ECO:0007669"/>
    <property type="project" value="TreeGrafter"/>
</dbReference>
<dbReference type="GO" id="GO:0002098">
    <property type="term" value="P:tRNA wobble uridine modification"/>
    <property type="evidence" value="ECO:0000250"/>
    <property type="project" value="UniProtKB"/>
</dbReference>
<dbReference type="FunFam" id="3.40.50.620:FF:000229">
    <property type="entry name" value="Cytoplasmic tRNA 2-thiolation protein 2"/>
    <property type="match status" value="1"/>
</dbReference>
<dbReference type="Gene3D" id="3.40.50.620">
    <property type="entry name" value="HUPs"/>
    <property type="match status" value="1"/>
</dbReference>
<dbReference type="HAMAP" id="MF_03054">
    <property type="entry name" value="CTU2"/>
    <property type="match status" value="1"/>
</dbReference>
<dbReference type="InterPro" id="IPR019407">
    <property type="entry name" value="CTU2"/>
</dbReference>
<dbReference type="InterPro" id="IPR014729">
    <property type="entry name" value="Rossmann-like_a/b/a_fold"/>
</dbReference>
<dbReference type="PANTHER" id="PTHR20882">
    <property type="entry name" value="CYTOPLASMIC TRNA 2-THIOLATION PROTEIN 2"/>
    <property type="match status" value="1"/>
</dbReference>
<dbReference type="PANTHER" id="PTHR20882:SF14">
    <property type="entry name" value="CYTOPLASMIC TRNA 2-THIOLATION PROTEIN 2"/>
    <property type="match status" value="1"/>
</dbReference>
<dbReference type="Pfam" id="PF10288">
    <property type="entry name" value="CTU2"/>
    <property type="match status" value="1"/>
</dbReference>
<dbReference type="SUPFAM" id="SSF52402">
    <property type="entry name" value="Adenine nucleotide alpha hydrolases-like"/>
    <property type="match status" value="1"/>
</dbReference>
<protein>
    <recommendedName>
        <fullName evidence="1">Cytoplasmic tRNA 2-thiolation protein 2</fullName>
    </recommendedName>
</protein>
<proteinExistence type="inferred from homology"/>
<sequence length="404" mass="44750">MCSIGEDDFGDEGAAHAMVVEALPLGIVLSPGNCSKCDVNSNELYKLNFREAECRECFLAYARHKFRAALGAAKILPRNAEVLLVLDGSAKSLVLLDMLHFAQTQNTFKRLHCNVHVVYVEEQHVQDRDPVGLEDLLSVSRQYAPFEFYVIELGQGCSLQRIKDYSPSLKANNELIYKLQKLQSLTARQDYLQQHRKNLICSVAQSLHCTHVFESNISVDLATQLLTAIALGRGASAALDVALLDDRLSGDVKLLRPLKDLSEQEITFYIHAQRLKPLFQNGSHYGMERGQTASIQNLTSAFVANLQQNYASTVSTVFRTGDKIAVNSNPEQASCVHCRSALDSELSDTLLAIEYSRSVSEAGVSLNKNEKDLEGLAKKRLEKQDGLCHACRTIQAEFDSGNLL</sequence>
<reference key="1">
    <citation type="journal article" date="2007" name="Nature">
        <title>Evolution of genes and genomes on the Drosophila phylogeny.</title>
        <authorList>
            <consortium name="Drosophila 12 genomes consortium"/>
        </authorList>
    </citation>
    <scope>NUCLEOTIDE SEQUENCE [LARGE SCALE GENOMIC DNA]</scope>
    <source>
        <strain>Tai18E2 / Tucson 14021-0261.01</strain>
    </source>
</reference>
<gene>
    <name type="ORF">GE12647</name>
</gene>
<keyword id="KW-0963">Cytoplasm</keyword>
<keyword id="KW-0819">tRNA processing</keyword>
<feature type="chain" id="PRO_0000369280" description="Cytoplasmic tRNA 2-thiolation protein 2">
    <location>
        <begin position="1"/>
        <end position="404"/>
    </location>
</feature>
<comment type="function">
    <text evidence="1">Plays a central role in 2-thiolation of mcm(5)S(2)U at tRNA wobble positions of tRNA(Lys), tRNA(Glu) and tRNA(Gln). May act by forming a heterodimer with NCS6/CTU1 that ligates sulfur from thiocarboxylated URM1 onto the uridine of tRNAs at wobble position.</text>
</comment>
<comment type="pathway">
    <text evidence="1">tRNA modification; 5-methoxycarbonylmethyl-2-thiouridine-tRNA biosynthesis.</text>
</comment>
<comment type="subcellular location">
    <subcellularLocation>
        <location evidence="1">Cytoplasm</location>
    </subcellularLocation>
</comment>
<comment type="similarity">
    <text evidence="1">Belongs to the CTU2/NCS2 family.</text>
</comment>
<evidence type="ECO:0000255" key="1">
    <source>
        <dbReference type="HAMAP-Rule" id="MF_03054"/>
    </source>
</evidence>